<comment type="function">
    <text evidence="1">Required for normal Golgi function.</text>
</comment>
<comment type="subunit">
    <text evidence="1">Component of the conserved oligomeric Golgi complex which is composed of eight different subunits and is required for normal Golgi morphology and localization.</text>
</comment>
<comment type="subcellular location">
    <subcellularLocation>
        <location evidence="1">Golgi apparatus membrane</location>
        <topology evidence="1">Peripheral membrane protein</topology>
        <orientation evidence="1">Cytoplasmic side</orientation>
    </subcellularLocation>
</comment>
<comment type="similarity">
    <text evidence="4">Belongs to the COG1 family.</text>
</comment>
<protein>
    <recommendedName>
        <fullName>Conserved oligomeric Golgi complex subunit 1</fullName>
        <shortName>COG complex subunit 1</shortName>
    </recommendedName>
    <alternativeName>
        <fullName evidence="5">Component of oligomeric Golgi complex 1</fullName>
    </alternativeName>
</protein>
<reference key="1">
    <citation type="journal article" date="2000" name="Science">
        <title>The genome sequence of Drosophila melanogaster.</title>
        <authorList>
            <person name="Adams M.D."/>
            <person name="Celniker S.E."/>
            <person name="Holt R.A."/>
            <person name="Evans C.A."/>
            <person name="Gocayne J.D."/>
            <person name="Amanatides P.G."/>
            <person name="Scherer S.E."/>
            <person name="Li P.W."/>
            <person name="Hoskins R.A."/>
            <person name="Galle R.F."/>
            <person name="George R.A."/>
            <person name="Lewis S.E."/>
            <person name="Richards S."/>
            <person name="Ashburner M."/>
            <person name="Henderson S.N."/>
            <person name="Sutton G.G."/>
            <person name="Wortman J.R."/>
            <person name="Yandell M.D."/>
            <person name="Zhang Q."/>
            <person name="Chen L.X."/>
            <person name="Brandon R.C."/>
            <person name="Rogers Y.-H.C."/>
            <person name="Blazej R.G."/>
            <person name="Champe M."/>
            <person name="Pfeiffer B.D."/>
            <person name="Wan K.H."/>
            <person name="Doyle C."/>
            <person name="Baxter E.G."/>
            <person name="Helt G."/>
            <person name="Nelson C.R."/>
            <person name="Miklos G.L.G."/>
            <person name="Abril J.F."/>
            <person name="Agbayani A."/>
            <person name="An H.-J."/>
            <person name="Andrews-Pfannkoch C."/>
            <person name="Baldwin D."/>
            <person name="Ballew R.M."/>
            <person name="Basu A."/>
            <person name="Baxendale J."/>
            <person name="Bayraktaroglu L."/>
            <person name="Beasley E.M."/>
            <person name="Beeson K.Y."/>
            <person name="Benos P.V."/>
            <person name="Berman B.P."/>
            <person name="Bhandari D."/>
            <person name="Bolshakov S."/>
            <person name="Borkova D."/>
            <person name="Botchan M.R."/>
            <person name="Bouck J."/>
            <person name="Brokstein P."/>
            <person name="Brottier P."/>
            <person name="Burtis K.C."/>
            <person name="Busam D.A."/>
            <person name="Butler H."/>
            <person name="Cadieu E."/>
            <person name="Center A."/>
            <person name="Chandra I."/>
            <person name="Cherry J.M."/>
            <person name="Cawley S."/>
            <person name="Dahlke C."/>
            <person name="Davenport L.B."/>
            <person name="Davies P."/>
            <person name="de Pablos B."/>
            <person name="Delcher A."/>
            <person name="Deng Z."/>
            <person name="Mays A.D."/>
            <person name="Dew I."/>
            <person name="Dietz S.M."/>
            <person name="Dodson K."/>
            <person name="Doup L.E."/>
            <person name="Downes M."/>
            <person name="Dugan-Rocha S."/>
            <person name="Dunkov B.C."/>
            <person name="Dunn P."/>
            <person name="Durbin K.J."/>
            <person name="Evangelista C.C."/>
            <person name="Ferraz C."/>
            <person name="Ferriera S."/>
            <person name="Fleischmann W."/>
            <person name="Fosler C."/>
            <person name="Gabrielian A.E."/>
            <person name="Garg N.S."/>
            <person name="Gelbart W.M."/>
            <person name="Glasser K."/>
            <person name="Glodek A."/>
            <person name="Gong F."/>
            <person name="Gorrell J.H."/>
            <person name="Gu Z."/>
            <person name="Guan P."/>
            <person name="Harris M."/>
            <person name="Harris N.L."/>
            <person name="Harvey D.A."/>
            <person name="Heiman T.J."/>
            <person name="Hernandez J.R."/>
            <person name="Houck J."/>
            <person name="Hostin D."/>
            <person name="Houston K.A."/>
            <person name="Howland T.J."/>
            <person name="Wei M.-H."/>
            <person name="Ibegwam C."/>
            <person name="Jalali M."/>
            <person name="Kalush F."/>
            <person name="Karpen G.H."/>
            <person name="Ke Z."/>
            <person name="Kennison J.A."/>
            <person name="Ketchum K.A."/>
            <person name="Kimmel B.E."/>
            <person name="Kodira C.D."/>
            <person name="Kraft C.L."/>
            <person name="Kravitz S."/>
            <person name="Kulp D."/>
            <person name="Lai Z."/>
            <person name="Lasko P."/>
            <person name="Lei Y."/>
            <person name="Levitsky A.A."/>
            <person name="Li J.H."/>
            <person name="Li Z."/>
            <person name="Liang Y."/>
            <person name="Lin X."/>
            <person name="Liu X."/>
            <person name="Mattei B."/>
            <person name="McIntosh T.C."/>
            <person name="McLeod M.P."/>
            <person name="McPherson D."/>
            <person name="Merkulov G."/>
            <person name="Milshina N.V."/>
            <person name="Mobarry C."/>
            <person name="Morris J."/>
            <person name="Moshrefi A."/>
            <person name="Mount S.M."/>
            <person name="Moy M."/>
            <person name="Murphy B."/>
            <person name="Murphy L."/>
            <person name="Muzny D.M."/>
            <person name="Nelson D.L."/>
            <person name="Nelson D.R."/>
            <person name="Nelson K.A."/>
            <person name="Nixon K."/>
            <person name="Nusskern D.R."/>
            <person name="Pacleb J.M."/>
            <person name="Palazzolo M."/>
            <person name="Pittman G.S."/>
            <person name="Pan S."/>
            <person name="Pollard J."/>
            <person name="Puri V."/>
            <person name="Reese M.G."/>
            <person name="Reinert K."/>
            <person name="Remington K."/>
            <person name="Saunders R.D.C."/>
            <person name="Scheeler F."/>
            <person name="Shen H."/>
            <person name="Shue B.C."/>
            <person name="Siden-Kiamos I."/>
            <person name="Simpson M."/>
            <person name="Skupski M.P."/>
            <person name="Smith T.J."/>
            <person name="Spier E."/>
            <person name="Spradling A.C."/>
            <person name="Stapleton M."/>
            <person name="Strong R."/>
            <person name="Sun E."/>
            <person name="Svirskas R."/>
            <person name="Tector C."/>
            <person name="Turner R."/>
            <person name="Venter E."/>
            <person name="Wang A.H."/>
            <person name="Wang X."/>
            <person name="Wang Z.-Y."/>
            <person name="Wassarman D.A."/>
            <person name="Weinstock G.M."/>
            <person name="Weissenbach J."/>
            <person name="Williams S.M."/>
            <person name="Woodage T."/>
            <person name="Worley K.C."/>
            <person name="Wu D."/>
            <person name="Yang S."/>
            <person name="Yao Q.A."/>
            <person name="Ye J."/>
            <person name="Yeh R.-F."/>
            <person name="Zaveri J.S."/>
            <person name="Zhan M."/>
            <person name="Zhang G."/>
            <person name="Zhao Q."/>
            <person name="Zheng L."/>
            <person name="Zheng X.H."/>
            <person name="Zhong F.N."/>
            <person name="Zhong W."/>
            <person name="Zhou X."/>
            <person name="Zhu S.C."/>
            <person name="Zhu X."/>
            <person name="Smith H.O."/>
            <person name="Gibbs R.A."/>
            <person name="Myers E.W."/>
            <person name="Rubin G.M."/>
            <person name="Venter J.C."/>
        </authorList>
    </citation>
    <scope>NUCLEOTIDE SEQUENCE [LARGE SCALE GENOMIC DNA]</scope>
    <source>
        <strain>Berkeley</strain>
    </source>
</reference>
<reference key="2">
    <citation type="journal article" date="2002" name="Genome Biol.">
        <title>Annotation of the Drosophila melanogaster euchromatic genome: a systematic review.</title>
        <authorList>
            <person name="Misra S."/>
            <person name="Crosby M.A."/>
            <person name="Mungall C.J."/>
            <person name="Matthews B.B."/>
            <person name="Campbell K.S."/>
            <person name="Hradecky P."/>
            <person name="Huang Y."/>
            <person name="Kaminker J.S."/>
            <person name="Millburn G.H."/>
            <person name="Prochnik S.E."/>
            <person name="Smith C.D."/>
            <person name="Tupy J.L."/>
            <person name="Whitfield E.J."/>
            <person name="Bayraktaroglu L."/>
            <person name="Berman B.P."/>
            <person name="Bettencourt B.R."/>
            <person name="Celniker S.E."/>
            <person name="de Grey A.D.N.J."/>
            <person name="Drysdale R.A."/>
            <person name="Harris N.L."/>
            <person name="Richter J."/>
            <person name="Russo S."/>
            <person name="Schroeder A.J."/>
            <person name="Shu S.Q."/>
            <person name="Stapleton M."/>
            <person name="Yamada C."/>
            <person name="Ashburner M."/>
            <person name="Gelbart W.M."/>
            <person name="Rubin G.M."/>
            <person name="Lewis S.E."/>
        </authorList>
    </citation>
    <scope>GENOME REANNOTATION</scope>
    <source>
        <strain>Berkeley</strain>
    </source>
</reference>
<reference key="3">
    <citation type="journal article" date="2002" name="Genome Biol.">
        <title>A Drosophila full-length cDNA resource.</title>
        <authorList>
            <person name="Stapleton M."/>
            <person name="Carlson J.W."/>
            <person name="Brokstein P."/>
            <person name="Yu C."/>
            <person name="Champe M."/>
            <person name="George R.A."/>
            <person name="Guarin H."/>
            <person name="Kronmiller B."/>
            <person name="Pacleb J.M."/>
            <person name="Park S."/>
            <person name="Wan K.H."/>
            <person name="Rubin G.M."/>
            <person name="Celniker S.E."/>
        </authorList>
    </citation>
    <scope>NUCLEOTIDE SEQUENCE [LARGE SCALE MRNA]</scope>
    <source>
        <strain>Berkeley</strain>
        <tissue>Head</tissue>
    </source>
</reference>
<reference key="4">
    <citation type="journal article" date="2008" name="J. Proteome Res.">
        <title>Phosphoproteome analysis of Drosophila melanogaster embryos.</title>
        <authorList>
            <person name="Zhai B."/>
            <person name="Villen J."/>
            <person name="Beausoleil S.A."/>
            <person name="Mintseris J."/>
            <person name="Gygi S.P."/>
        </authorList>
    </citation>
    <scope>PHOSPHORYLATION [LARGE SCALE ANALYSIS] AT SER-839</scope>
    <scope>IDENTIFICATION BY MASS SPECTROMETRY</scope>
    <source>
        <tissue>Embryo</tissue>
    </source>
</reference>
<name>COG1_DROME</name>
<organism>
    <name type="scientific">Drosophila melanogaster</name>
    <name type="common">Fruit fly</name>
    <dbReference type="NCBI Taxonomy" id="7227"/>
    <lineage>
        <taxon>Eukaryota</taxon>
        <taxon>Metazoa</taxon>
        <taxon>Ecdysozoa</taxon>
        <taxon>Arthropoda</taxon>
        <taxon>Hexapoda</taxon>
        <taxon>Insecta</taxon>
        <taxon>Pterygota</taxon>
        <taxon>Neoptera</taxon>
        <taxon>Endopterygota</taxon>
        <taxon>Diptera</taxon>
        <taxon>Brachycera</taxon>
        <taxon>Muscomorpha</taxon>
        <taxon>Ephydroidea</taxon>
        <taxon>Drosophilidae</taxon>
        <taxon>Drosophila</taxon>
        <taxon>Sophophora</taxon>
    </lineage>
</organism>
<accession>Q9VGC3</accession>
<evidence type="ECO:0000250" key="1"/>
<evidence type="ECO:0000256" key="2">
    <source>
        <dbReference type="SAM" id="MobiDB-lite"/>
    </source>
</evidence>
<evidence type="ECO:0000269" key="3">
    <source>
    </source>
</evidence>
<evidence type="ECO:0000305" key="4"/>
<evidence type="ECO:0000312" key="5">
    <source>
        <dbReference type="FlyBase" id="FBgn0037998"/>
    </source>
</evidence>
<proteinExistence type="evidence at protein level"/>
<sequence>MTANLLNLNVDTLFEQHSVSEIDEVHKKIQSVVENKREELRTHVGERYRDLLQAADTIAAMQTSAGTLMEQVRHVQANCRSLNEQQLLGFQSTANASAKDAALKERNAGKKLQTYYGTMAQIKLLTALPELIWTHLDNDRFYAATELFIFSRHISTGLQLDGQSALMQKLPVARKQWEILRPFHVTIKQAILTALEREELLQEMTVDCLQSLLLLDKSDLSTVLKSFLNLRSSAFLNCLQSGPSEPRRVKDRILASLNVLNSTVELLDKCLLGYSLLFSRLEECASSTCPPSINRMESSERQLVHLLPEIIAGFKPQFDVPQLTPEQLGSSLQQWLDKMNALAAAHLQQVFALVTNMQTIQDIKSAARTNGRPDFVRLEQQLHLKRSQLDFYARKYVPLINARVREIIRSSWASAMKLTYEQVLLLIEAGQSQPPLQIWREQSDDLPLSLAAALSDQPKRLANRTKGYDGATIELCKRFDSHLADIVQELNVMLQEQTTRAEDKVSLIEFLRETAEEQLTEYLSNLKGLELRERPALLLALRNSLALVELCPNLKLCFCQPSSWRQWTDNSAGLGIEHWQRICGLIEKEMLSFWLVIVDDVLAGHNCEEKLPKVINHEVVLSDFALWQTLTLEQRDEDQEQSVQSTIRIPSQPRLSLQTYLHQLIQALNSVVPQTLPPKVLQAFIQRLIGKLLCHYEGLAHAECTKASQNIALQLYFDLKFLERVFAISREERTLYDQIHAQQNQLRDYIDPFDFELFAEHITAHVSRAASRLQGELGVLTPSAAAPSQGAAAASSLAHEADPNVLCLSSSGSTSLWFPLLPIVMPQAAGRVTSAERKSPIQEPVEKTATTTPTRKSGGNGARKGDSSKSKSSAASFFGMSQEWFR</sequence>
<feature type="chain" id="PRO_0000213493" description="Conserved oligomeric Golgi complex subunit 1">
    <location>
        <begin position="1"/>
        <end position="886"/>
    </location>
</feature>
<feature type="region of interest" description="Disordered" evidence="2">
    <location>
        <begin position="834"/>
        <end position="886"/>
    </location>
</feature>
<feature type="compositionally biased region" description="Basic and acidic residues" evidence="2">
    <location>
        <begin position="834"/>
        <end position="846"/>
    </location>
</feature>
<feature type="compositionally biased region" description="Polar residues" evidence="2">
    <location>
        <begin position="848"/>
        <end position="857"/>
    </location>
</feature>
<feature type="modified residue" description="Phosphoserine" evidence="3">
    <location>
        <position position="839"/>
    </location>
</feature>
<gene>
    <name evidence="5" type="primary">Cog1</name>
    <name evidence="5" type="ORF">CG4848</name>
</gene>
<dbReference type="EMBL" id="AE014297">
    <property type="protein sequence ID" value="AAF54760.1"/>
    <property type="molecule type" value="Genomic_DNA"/>
</dbReference>
<dbReference type="EMBL" id="AY058448">
    <property type="protein sequence ID" value="AAL13677.1"/>
    <property type="molecule type" value="mRNA"/>
</dbReference>
<dbReference type="RefSeq" id="NP_001262497.1">
    <property type="nucleotide sequence ID" value="NM_001275568.1"/>
</dbReference>
<dbReference type="RefSeq" id="NP_650162.1">
    <property type="nucleotide sequence ID" value="NM_141905.3"/>
</dbReference>
<dbReference type="SMR" id="Q9VGC3"/>
<dbReference type="BioGRID" id="66592">
    <property type="interactions" value="3"/>
</dbReference>
<dbReference type="ComplexPortal" id="CPX-2794">
    <property type="entry name" value="COG tethering complex"/>
</dbReference>
<dbReference type="DIP" id="DIP-23267N"/>
<dbReference type="FunCoup" id="Q9VGC3">
    <property type="interactions" value="1379"/>
</dbReference>
<dbReference type="IntAct" id="Q9VGC3">
    <property type="interactions" value="3"/>
</dbReference>
<dbReference type="STRING" id="7227.FBpp0306664"/>
<dbReference type="iPTMnet" id="Q9VGC3"/>
<dbReference type="PaxDb" id="7227-FBpp0082093"/>
<dbReference type="DNASU" id="41479"/>
<dbReference type="EnsemblMetazoa" id="FBtr0082624">
    <property type="protein sequence ID" value="FBpp0082093"/>
    <property type="gene ID" value="FBgn0037998"/>
</dbReference>
<dbReference type="EnsemblMetazoa" id="FBtr0334597">
    <property type="protein sequence ID" value="FBpp0306664"/>
    <property type="gene ID" value="FBgn0037998"/>
</dbReference>
<dbReference type="GeneID" id="41479"/>
<dbReference type="KEGG" id="dme:Dmel_CG4848"/>
<dbReference type="UCSC" id="CG4848-RA">
    <property type="organism name" value="d. melanogaster"/>
</dbReference>
<dbReference type="AGR" id="FB:FBgn0037998"/>
<dbReference type="CTD" id="9382"/>
<dbReference type="FlyBase" id="FBgn0037998">
    <property type="gene designation" value="Cog1"/>
</dbReference>
<dbReference type="VEuPathDB" id="VectorBase:FBgn0037998"/>
<dbReference type="eggNOG" id="KOG2033">
    <property type="taxonomic scope" value="Eukaryota"/>
</dbReference>
<dbReference type="GeneTree" id="ENSGT00390000017136"/>
<dbReference type="HOGENOM" id="CLU_012605_0_0_1"/>
<dbReference type="InParanoid" id="Q9VGC3"/>
<dbReference type="OMA" id="DNPRRQT"/>
<dbReference type="OrthoDB" id="46189at2759"/>
<dbReference type="PhylomeDB" id="Q9VGC3"/>
<dbReference type="Reactome" id="R-DME-6807878">
    <property type="pathway name" value="COPI-mediated anterograde transport"/>
</dbReference>
<dbReference type="Reactome" id="R-DME-6811438">
    <property type="pathway name" value="Intra-Golgi traffic"/>
</dbReference>
<dbReference type="Reactome" id="R-DME-6811440">
    <property type="pathway name" value="Retrograde transport at the Trans-Golgi-Network"/>
</dbReference>
<dbReference type="SignaLink" id="Q9VGC3"/>
<dbReference type="BioGRID-ORCS" id="41479">
    <property type="hits" value="1 hit in 1 CRISPR screen"/>
</dbReference>
<dbReference type="GenomeRNAi" id="41479"/>
<dbReference type="PRO" id="PR:Q9VGC3"/>
<dbReference type="Proteomes" id="UP000000803">
    <property type="component" value="Chromosome 3R"/>
</dbReference>
<dbReference type="Bgee" id="FBgn0037998">
    <property type="expression patterns" value="Expressed in indirect flight muscle cell (Drosophila) in body wall and 93 other cell types or tissues"/>
</dbReference>
<dbReference type="ExpressionAtlas" id="Q9VGC3">
    <property type="expression patterns" value="baseline and differential"/>
</dbReference>
<dbReference type="GO" id="GO:0005794">
    <property type="term" value="C:Golgi apparatus"/>
    <property type="evidence" value="ECO:0000250"/>
    <property type="project" value="FlyBase"/>
</dbReference>
<dbReference type="GO" id="GO:0000139">
    <property type="term" value="C:Golgi membrane"/>
    <property type="evidence" value="ECO:0007669"/>
    <property type="project" value="UniProtKB-SubCell"/>
</dbReference>
<dbReference type="GO" id="GO:0017119">
    <property type="term" value="C:Golgi transport complex"/>
    <property type="evidence" value="ECO:0000314"/>
    <property type="project" value="FlyBase"/>
</dbReference>
<dbReference type="GO" id="GO:0007030">
    <property type="term" value="P:Golgi organization"/>
    <property type="evidence" value="ECO:0000250"/>
    <property type="project" value="FlyBase"/>
</dbReference>
<dbReference type="GO" id="GO:0006891">
    <property type="term" value="P:intra-Golgi vesicle-mediated transport"/>
    <property type="evidence" value="ECO:0000250"/>
    <property type="project" value="FlyBase"/>
</dbReference>
<dbReference type="GO" id="GO:0015031">
    <property type="term" value="P:protein transport"/>
    <property type="evidence" value="ECO:0007669"/>
    <property type="project" value="UniProtKB-KW"/>
</dbReference>
<dbReference type="InterPro" id="IPR033370">
    <property type="entry name" value="COG1"/>
</dbReference>
<dbReference type="PANTHER" id="PTHR31658">
    <property type="entry name" value="CONSERVED OLIGOMERIC GOLGI COMPLEX SUBUNIT 1"/>
    <property type="match status" value="1"/>
</dbReference>
<dbReference type="PANTHER" id="PTHR31658:SF0">
    <property type="entry name" value="CONSERVED OLIGOMERIC GOLGI COMPLEX SUBUNIT 1"/>
    <property type="match status" value="1"/>
</dbReference>
<dbReference type="Pfam" id="PF08700">
    <property type="entry name" value="VPS51_Exo84_N"/>
    <property type="match status" value="1"/>
</dbReference>
<keyword id="KW-0333">Golgi apparatus</keyword>
<keyword id="KW-0472">Membrane</keyword>
<keyword id="KW-0597">Phosphoprotein</keyword>
<keyword id="KW-0653">Protein transport</keyword>
<keyword id="KW-1185">Reference proteome</keyword>
<keyword id="KW-0813">Transport</keyword>